<feature type="chain" id="PRO_0000280791" description="Beta sliding clamp">
    <location>
        <begin position="1"/>
        <end position="379"/>
    </location>
</feature>
<gene>
    <name type="primary">dnaN</name>
    <name type="ordered locus">RF_0649</name>
</gene>
<sequence length="379" mass="42265">MLKLIVETKTLVQSLGFASSVVEKRNVIPEYANIKLSAKDGNLELSSTNMDLYLSQKIAVQVVSEGELTVSTKTLNDIVRKLPDSELTLTDLGTTGLEIKGKNCKFNLFTLPVSSFPPMDSINPEASFKISCTDFAKIIESTKFSISLDETRYNLNGVYLHIKDKEFCSASTDGHRLSISWVTLEKQIKNFGVILPQKSAEEILKIVKDPKNINEDIEILLSSNKIKFICNENTIMLSKLIDGTFPDYSAFIPESSSSKLVINRKIFADSIERIAIITVEKFRAVKLSLSRETLEISAVGEARGNAKEVINSSQDKESFYEYNSDESLAIGFNPQYLEDVLKAVKSDLVELYFSDVSAPVLIKFPENPKDIFVVMPVKV</sequence>
<keyword id="KW-0963">Cytoplasm</keyword>
<keyword id="KW-0235">DNA replication</keyword>
<keyword id="KW-0238">DNA-binding</keyword>
<keyword id="KW-0239">DNA-directed DNA polymerase</keyword>
<keyword id="KW-0548">Nucleotidyltransferase</keyword>
<keyword id="KW-0808">Transferase</keyword>
<protein>
    <recommendedName>
        <fullName>Beta sliding clamp</fullName>
        <shortName>Beta clamp</shortName>
        <shortName>Sliding clamp</shortName>
    </recommendedName>
    <alternativeName>
        <fullName>Beta-clamp processivity factor</fullName>
    </alternativeName>
    <alternativeName>
        <fullName>DNA polymerase III beta sliding clamp subunit</fullName>
    </alternativeName>
    <alternativeName>
        <fullName>DNA polymerase III subunit beta</fullName>
    </alternativeName>
</protein>
<reference key="1">
    <citation type="journal article" date="2005" name="PLoS Biol.">
        <title>The genome sequence of Rickettsia felis identifies the first putative conjugative plasmid in an obligate intracellular parasite.</title>
        <authorList>
            <person name="Ogata H."/>
            <person name="Renesto P."/>
            <person name="Audic S."/>
            <person name="Robert C."/>
            <person name="Blanc G."/>
            <person name="Fournier P.-E."/>
            <person name="Parinello H."/>
            <person name="Claverie J.-M."/>
            <person name="Raoult D."/>
        </authorList>
    </citation>
    <scope>NUCLEOTIDE SEQUENCE [LARGE SCALE GENOMIC DNA]</scope>
    <source>
        <strain>ATCC VR-1525 / URRWXCal2</strain>
    </source>
</reference>
<dbReference type="EMBL" id="CP000053">
    <property type="protein sequence ID" value="AAY61500.1"/>
    <property type="molecule type" value="Genomic_DNA"/>
</dbReference>
<dbReference type="SMR" id="Q4ULS3"/>
<dbReference type="STRING" id="315456.RF_0649"/>
<dbReference type="KEGG" id="rfe:RF_0649"/>
<dbReference type="eggNOG" id="COG0592">
    <property type="taxonomic scope" value="Bacteria"/>
</dbReference>
<dbReference type="HOGENOM" id="CLU_038149_4_2_5"/>
<dbReference type="OrthoDB" id="8421503at2"/>
<dbReference type="Proteomes" id="UP000008548">
    <property type="component" value="Chromosome"/>
</dbReference>
<dbReference type="GO" id="GO:0005737">
    <property type="term" value="C:cytoplasm"/>
    <property type="evidence" value="ECO:0007669"/>
    <property type="project" value="UniProtKB-SubCell"/>
</dbReference>
<dbReference type="GO" id="GO:0009360">
    <property type="term" value="C:DNA polymerase III complex"/>
    <property type="evidence" value="ECO:0007669"/>
    <property type="project" value="InterPro"/>
</dbReference>
<dbReference type="GO" id="GO:0008408">
    <property type="term" value="F:3'-5' exonuclease activity"/>
    <property type="evidence" value="ECO:0007669"/>
    <property type="project" value="InterPro"/>
</dbReference>
<dbReference type="GO" id="GO:0003677">
    <property type="term" value="F:DNA binding"/>
    <property type="evidence" value="ECO:0007669"/>
    <property type="project" value="UniProtKB-KW"/>
</dbReference>
<dbReference type="GO" id="GO:0003887">
    <property type="term" value="F:DNA-directed DNA polymerase activity"/>
    <property type="evidence" value="ECO:0007669"/>
    <property type="project" value="UniProtKB-KW"/>
</dbReference>
<dbReference type="GO" id="GO:0006271">
    <property type="term" value="P:DNA strand elongation involved in DNA replication"/>
    <property type="evidence" value="ECO:0007669"/>
    <property type="project" value="TreeGrafter"/>
</dbReference>
<dbReference type="CDD" id="cd00140">
    <property type="entry name" value="beta_clamp"/>
    <property type="match status" value="1"/>
</dbReference>
<dbReference type="Gene3D" id="3.70.10.10">
    <property type="match status" value="1"/>
</dbReference>
<dbReference type="Gene3D" id="3.10.150.10">
    <property type="entry name" value="DNA Polymerase III, subunit A, domain 2"/>
    <property type="match status" value="1"/>
</dbReference>
<dbReference type="InterPro" id="IPR046938">
    <property type="entry name" value="DNA_clamp_sf"/>
</dbReference>
<dbReference type="InterPro" id="IPR001001">
    <property type="entry name" value="DNA_polIII_beta"/>
</dbReference>
<dbReference type="InterPro" id="IPR022635">
    <property type="entry name" value="DNA_polIII_beta_C"/>
</dbReference>
<dbReference type="InterPro" id="IPR022637">
    <property type="entry name" value="DNA_polIII_beta_cen"/>
</dbReference>
<dbReference type="InterPro" id="IPR022634">
    <property type="entry name" value="DNA_polIII_beta_N"/>
</dbReference>
<dbReference type="NCBIfam" id="TIGR00663">
    <property type="entry name" value="dnan"/>
    <property type="match status" value="1"/>
</dbReference>
<dbReference type="PANTHER" id="PTHR30478:SF0">
    <property type="entry name" value="BETA SLIDING CLAMP"/>
    <property type="match status" value="1"/>
</dbReference>
<dbReference type="PANTHER" id="PTHR30478">
    <property type="entry name" value="DNA POLYMERASE III SUBUNIT BETA"/>
    <property type="match status" value="1"/>
</dbReference>
<dbReference type="Pfam" id="PF00712">
    <property type="entry name" value="DNA_pol3_beta"/>
    <property type="match status" value="1"/>
</dbReference>
<dbReference type="Pfam" id="PF02767">
    <property type="entry name" value="DNA_pol3_beta_2"/>
    <property type="match status" value="1"/>
</dbReference>
<dbReference type="Pfam" id="PF02768">
    <property type="entry name" value="DNA_pol3_beta_3"/>
    <property type="match status" value="1"/>
</dbReference>
<dbReference type="PIRSF" id="PIRSF000804">
    <property type="entry name" value="DNA_pol_III_b"/>
    <property type="match status" value="1"/>
</dbReference>
<dbReference type="SMART" id="SM00480">
    <property type="entry name" value="POL3Bc"/>
    <property type="match status" value="1"/>
</dbReference>
<dbReference type="SUPFAM" id="SSF55979">
    <property type="entry name" value="DNA clamp"/>
    <property type="match status" value="3"/>
</dbReference>
<accession>Q4ULS3</accession>
<evidence type="ECO:0000250" key="1">
    <source>
        <dbReference type="UniProtKB" id="P0A988"/>
    </source>
</evidence>
<evidence type="ECO:0000305" key="2"/>
<organism>
    <name type="scientific">Rickettsia felis (strain ATCC VR-1525 / URRWXCal2)</name>
    <name type="common">Rickettsia azadi</name>
    <dbReference type="NCBI Taxonomy" id="315456"/>
    <lineage>
        <taxon>Bacteria</taxon>
        <taxon>Pseudomonadati</taxon>
        <taxon>Pseudomonadota</taxon>
        <taxon>Alphaproteobacteria</taxon>
        <taxon>Rickettsiales</taxon>
        <taxon>Rickettsiaceae</taxon>
        <taxon>Rickettsieae</taxon>
        <taxon>Rickettsia</taxon>
        <taxon>spotted fever group</taxon>
    </lineage>
</organism>
<name>DPO3B_RICFE</name>
<comment type="function">
    <text evidence="1">Confers DNA tethering and processivity to DNA polymerases and other proteins. Acts as a clamp, forming a ring around DNA (a reaction catalyzed by the clamp-loading complex) which diffuses in an ATP-independent manner freely and bidirectionally along dsDNA. Initially characterized for its ability to contact the catalytic subunit of DNA polymerase III (Pol III), a complex, multichain enzyme responsible for most of the replicative synthesis in bacteria; Pol III exhibits 3'-5' exonuclease proofreading activity. The beta chain is required for initiation of replication as well as for processivity of DNA replication.</text>
</comment>
<comment type="subunit">
    <text evidence="1">Forms a ring-shaped head-to-tail homodimer around DNA which binds and tethers DNA polymerases and other proteins to the DNA. The DNA replisome complex has a single clamp-loading complex (3 tau and 1 each of delta, delta', psi and chi subunits) which binds 3 Pol III cores (1 core on the leading strand and 2 on the lagging strand) each with a beta sliding clamp dimer. Additional proteins in the replisome are other copies of gamma, psi and chi, Ssb, DNA helicase and RNA primase.</text>
</comment>
<comment type="subcellular location">
    <subcellularLocation>
        <location evidence="1">Cytoplasm</location>
    </subcellularLocation>
</comment>
<comment type="similarity">
    <text evidence="2">Belongs to the beta sliding clamp family.</text>
</comment>
<proteinExistence type="inferred from homology"/>